<protein>
    <recommendedName>
        <fullName>Regulatory protein MsrR</fullName>
    </recommendedName>
</protein>
<reference key="1">
    <citation type="journal article" date="2002" name="Lancet">
        <title>Genome and virulence determinants of high virulence community-acquired MRSA.</title>
        <authorList>
            <person name="Baba T."/>
            <person name="Takeuchi F."/>
            <person name="Kuroda M."/>
            <person name="Yuzawa H."/>
            <person name="Aoki K."/>
            <person name="Oguchi A."/>
            <person name="Nagai Y."/>
            <person name="Iwama N."/>
            <person name="Asano K."/>
            <person name="Naimi T."/>
            <person name="Kuroda H."/>
            <person name="Cui L."/>
            <person name="Yamamoto K."/>
            <person name="Hiramatsu K."/>
        </authorList>
    </citation>
    <scope>NUCLEOTIDE SEQUENCE [LARGE SCALE GENOMIC DNA]</scope>
    <source>
        <strain>MW2</strain>
    </source>
</reference>
<comment type="function">
    <text evidence="1">Involved in SarA attenuation. Affects resistance to oxacillin and teicoplanin, as well as the synthesis of virulence factors (By similarity).</text>
</comment>
<comment type="subcellular location">
    <subcellularLocation>
        <location evidence="4">Cell membrane</location>
        <topology evidence="4">Single-pass type II membrane protein</topology>
    </subcellularLocation>
</comment>
<comment type="similarity">
    <text evidence="4">Belongs to the LytR/CpsA/Psr (LCP) family.</text>
</comment>
<name>MSRR_STAAW</name>
<feature type="chain" id="PRO_0000218507" description="Regulatory protein MsrR">
    <location>
        <begin position="1"/>
        <end position="327"/>
    </location>
</feature>
<feature type="topological domain" description="Cytoplasmic" evidence="2">
    <location>
        <begin position="1"/>
        <end position="31"/>
    </location>
</feature>
<feature type="transmembrane region" description="Helical; Signal-anchor for type II membrane protein" evidence="2">
    <location>
        <begin position="32"/>
        <end position="52"/>
    </location>
</feature>
<feature type="topological domain" description="Extracellular" evidence="2">
    <location>
        <begin position="53"/>
        <end position="327"/>
    </location>
</feature>
<feature type="region of interest" description="Disordered" evidence="3">
    <location>
        <begin position="1"/>
        <end position="24"/>
    </location>
</feature>
<feature type="compositionally biased region" description="Basic and acidic residues" evidence="3">
    <location>
        <begin position="1"/>
        <end position="18"/>
    </location>
</feature>
<dbReference type="EMBL" id="BA000033">
    <property type="protein sequence ID" value="BAB95114.1"/>
    <property type="molecule type" value="Genomic_DNA"/>
</dbReference>
<dbReference type="RefSeq" id="WP_000356975.1">
    <property type="nucleotide sequence ID" value="NC_003923.1"/>
</dbReference>
<dbReference type="SMR" id="Q7A0Y4"/>
<dbReference type="KEGG" id="sam:MW1249"/>
<dbReference type="HOGENOM" id="CLU_016455_1_0_9"/>
<dbReference type="GO" id="GO:0005886">
    <property type="term" value="C:plasma membrane"/>
    <property type="evidence" value="ECO:0007669"/>
    <property type="project" value="UniProtKB-SubCell"/>
</dbReference>
<dbReference type="Gene3D" id="3.40.630.190">
    <property type="entry name" value="LCP protein"/>
    <property type="match status" value="1"/>
</dbReference>
<dbReference type="InterPro" id="IPR050922">
    <property type="entry name" value="LytR/CpsA/Psr_CW_biosynth"/>
</dbReference>
<dbReference type="InterPro" id="IPR004474">
    <property type="entry name" value="LytR_CpsA_psr"/>
</dbReference>
<dbReference type="NCBIfam" id="TIGR00350">
    <property type="entry name" value="lytR_cpsA_psr"/>
    <property type="match status" value="1"/>
</dbReference>
<dbReference type="PANTHER" id="PTHR33392">
    <property type="entry name" value="POLYISOPRENYL-TEICHOIC ACID--PEPTIDOGLYCAN TEICHOIC ACID TRANSFERASE TAGU"/>
    <property type="match status" value="1"/>
</dbReference>
<dbReference type="PANTHER" id="PTHR33392:SF8">
    <property type="entry name" value="REGULATORY PROTEIN MSRR"/>
    <property type="match status" value="1"/>
</dbReference>
<dbReference type="Pfam" id="PF03816">
    <property type="entry name" value="LytR_cpsA_psr"/>
    <property type="match status" value="1"/>
</dbReference>
<organism>
    <name type="scientific">Staphylococcus aureus (strain MW2)</name>
    <dbReference type="NCBI Taxonomy" id="196620"/>
    <lineage>
        <taxon>Bacteria</taxon>
        <taxon>Bacillati</taxon>
        <taxon>Bacillota</taxon>
        <taxon>Bacilli</taxon>
        <taxon>Bacillales</taxon>
        <taxon>Staphylococcaceae</taxon>
        <taxon>Staphylococcus</taxon>
    </lineage>
</organism>
<sequence length="327" mass="36971">MDKETNDNEYRRQSEHRTSAPKRKKKKKIRKLPIILLIVVILLIALVVYIVHSYNSGVEYAKKHAKDVKVHQFNGPVKNDGKISILVLGADKAQGGQSRTDSIMVVQYDFINKKMKMMSVMRDIYADIPGYGKHKINSAYALGGPELLRKTLDKNLGINPEYYAVVDFTGFEKMIDELMPEGVPINVEKDMSKNIGVSLKKGNHRLNGKELLGYARFRHDPEGDFGRVRRQQQVMQTLKKEMVNFRTVVKLPKVAGILRGYVNTNIPDSGIFQTGLSFGIRGEKDVKSLTVPIKNSYEDVNTNTDGSALQINKNTNKQAIKDFLDED</sequence>
<evidence type="ECO:0000250" key="1"/>
<evidence type="ECO:0000255" key="2"/>
<evidence type="ECO:0000256" key="3">
    <source>
        <dbReference type="SAM" id="MobiDB-lite"/>
    </source>
</evidence>
<evidence type="ECO:0000305" key="4"/>
<accession>Q7A0Y4</accession>
<proteinExistence type="inferred from homology"/>
<keyword id="KW-1003">Cell membrane</keyword>
<keyword id="KW-0472">Membrane</keyword>
<keyword id="KW-0735">Signal-anchor</keyword>
<keyword id="KW-0804">Transcription</keyword>
<keyword id="KW-0805">Transcription regulation</keyword>
<keyword id="KW-0812">Transmembrane</keyword>
<keyword id="KW-1133">Transmembrane helix</keyword>
<gene>
    <name type="primary">msrR</name>
    <name type="ordered locus">MW1249</name>
</gene>